<feature type="chain" id="PRO_0000331673" description="Homeobox-leucine zipper protein HDG12">
    <location>
        <begin position="1"/>
        <end position="687"/>
    </location>
</feature>
<feature type="domain" description="START" evidence="3">
    <location>
        <begin position="206"/>
        <end position="440"/>
    </location>
</feature>
<feature type="DNA-binding region" description="Homeobox" evidence="2">
    <location>
        <begin position="21"/>
        <end position="80"/>
    </location>
</feature>
<feature type="region of interest" description="Disordered" evidence="4">
    <location>
        <begin position="1"/>
        <end position="32"/>
    </location>
</feature>
<feature type="coiled-coil region" evidence="1">
    <location>
        <begin position="87"/>
        <end position="150"/>
    </location>
</feature>
<feature type="compositionally biased region" description="Basic and acidic residues" evidence="4">
    <location>
        <begin position="8"/>
        <end position="17"/>
    </location>
</feature>
<feature type="compositionally biased region" description="Basic residues" evidence="4">
    <location>
        <begin position="18"/>
        <end position="30"/>
    </location>
</feature>
<proteinExistence type="evidence at protein level"/>
<sequence length="687" mass="76527">MEFLGDSQNHDSSETEKKNKKKKRFHRHTPHQIQRLESTFNECQHPDEKQRNQLSRELGLAPRQIKFWFQNRRTQKKAQHERADNCALKEENDKIRCENIAIREAIKHAICPSCGDSPVNEDSYFDEQKLRIENAQLRDELERVSSIAAKFLGRPISHLPPLLNPMHVSPLELFHTGPSLDFDLLPGSCSSMSVPSLPSQPNLVLSEMDKSLMTNIAVTAMEELLRLLQTNEPLWIKTDGCRDVLNLENYENMFTRSSTSGGKKNNLGMEASRSSGVVFTNAITLVDMLMNSVKLTELFPSIVASSKTLAVISSGLRGNHGDALHLMIEELQVLSPLVTTREFCVLRYCQQIEHGTWAIVNVSYEFPQFISQSRSYRFPSGCLIQDMSNGYSKVTWVEHGEFEEQEPIHEMFKDIVHKGLAFGAERWIATLQRMCERFTNLLEPATSSLDLGGVIPSPEGKRSIMRLAHRMVSNFCLSVGTSNNTRSTVVSGLDEFGIRVTSHKSRHEPNGMVLCAATSFWLPISPQNVFNFLKDERTRPQWDVLSNGNSVQEVAHITNGSNPGNCISVLRGFNASSSQNNMLILQESCIDSSSAALVIYTPVDLPALNIAMSGQDTSYIPILPSGFAISPDGSSKGGGSLITVGFQIMVSGLQPAKLNMESMETVNNLINTTVHQIKTTLNCPSTA</sequence>
<evidence type="ECO:0000255" key="1"/>
<evidence type="ECO:0000255" key="2">
    <source>
        <dbReference type="PROSITE-ProRule" id="PRU00108"/>
    </source>
</evidence>
<evidence type="ECO:0000255" key="3">
    <source>
        <dbReference type="PROSITE-ProRule" id="PRU00197"/>
    </source>
</evidence>
<evidence type="ECO:0000256" key="4">
    <source>
        <dbReference type="SAM" id="MobiDB-lite"/>
    </source>
</evidence>
<evidence type="ECO:0000269" key="5">
    <source>
    </source>
</evidence>
<evidence type="ECO:0000269" key="6">
    <source>
    </source>
</evidence>
<evidence type="ECO:0000269" key="7">
    <source>
    </source>
</evidence>
<evidence type="ECO:0000269" key="8">
    <source>
    </source>
</evidence>
<evidence type="ECO:0000303" key="9">
    <source>
    </source>
</evidence>
<evidence type="ECO:0000303" key="10">
    <source>
    </source>
</evidence>
<evidence type="ECO:0000305" key="11"/>
<evidence type="ECO:0000312" key="12">
    <source>
        <dbReference type="Araport" id="AT1G17920"/>
    </source>
</evidence>
<evidence type="ECO:0000312" key="13">
    <source>
        <dbReference type="EMBL" id="AAF97271.1"/>
    </source>
</evidence>
<organism>
    <name type="scientific">Arabidopsis thaliana</name>
    <name type="common">Mouse-ear cress</name>
    <dbReference type="NCBI Taxonomy" id="3702"/>
    <lineage>
        <taxon>Eukaryota</taxon>
        <taxon>Viridiplantae</taxon>
        <taxon>Streptophyta</taxon>
        <taxon>Embryophyta</taxon>
        <taxon>Tracheophyta</taxon>
        <taxon>Spermatophyta</taxon>
        <taxon>Magnoliopsida</taxon>
        <taxon>eudicotyledons</taxon>
        <taxon>Gunneridae</taxon>
        <taxon>Pentapetalae</taxon>
        <taxon>rosids</taxon>
        <taxon>malvids</taxon>
        <taxon>Brassicales</taxon>
        <taxon>Brassicaceae</taxon>
        <taxon>Camelineae</taxon>
        <taxon>Arabidopsis</taxon>
    </lineage>
</organism>
<keyword id="KW-0175">Coiled coil</keyword>
<keyword id="KW-0238">DNA-binding</keyword>
<keyword id="KW-0371">Homeobox</keyword>
<keyword id="KW-0539">Nucleus</keyword>
<keyword id="KW-1185">Reference proteome</keyword>
<keyword id="KW-0804">Transcription</keyword>
<keyword id="KW-0805">Transcription regulation</keyword>
<protein>
    <recommendedName>
        <fullName evidence="10">Homeobox-leucine zipper protein HDG12</fullName>
    </recommendedName>
    <alternativeName>
        <fullName evidence="10">HD-ZIP protein HDG12</fullName>
    </alternativeName>
    <alternativeName>
        <fullName evidence="9">Homeodomain GLABRA 2-like protein 12</fullName>
    </alternativeName>
    <alternativeName>
        <fullName evidence="10">Homeodomain transcription factor HDG12</fullName>
    </alternativeName>
    <alternativeName>
        <fullName evidence="10">Protein HOMEODOMAIN GLABROUS 12</fullName>
    </alternativeName>
</protein>
<accession>Q9LMT8</accession>
<accession>Q944S7</accession>
<reference key="1">
    <citation type="journal article" date="2000" name="Nature">
        <title>Sequence and analysis of chromosome 1 of the plant Arabidopsis thaliana.</title>
        <authorList>
            <person name="Theologis A."/>
            <person name="Ecker J.R."/>
            <person name="Palm C.J."/>
            <person name="Federspiel N.A."/>
            <person name="Kaul S."/>
            <person name="White O."/>
            <person name="Alonso J."/>
            <person name="Altafi H."/>
            <person name="Araujo R."/>
            <person name="Bowman C.L."/>
            <person name="Brooks S.Y."/>
            <person name="Buehler E."/>
            <person name="Chan A."/>
            <person name="Chao Q."/>
            <person name="Chen H."/>
            <person name="Cheuk R.F."/>
            <person name="Chin C.W."/>
            <person name="Chung M.K."/>
            <person name="Conn L."/>
            <person name="Conway A.B."/>
            <person name="Conway A.R."/>
            <person name="Creasy T.H."/>
            <person name="Dewar K."/>
            <person name="Dunn P."/>
            <person name="Etgu P."/>
            <person name="Feldblyum T.V."/>
            <person name="Feng J.-D."/>
            <person name="Fong B."/>
            <person name="Fujii C.Y."/>
            <person name="Gill J.E."/>
            <person name="Goldsmith A.D."/>
            <person name="Haas B."/>
            <person name="Hansen N.F."/>
            <person name="Hughes B."/>
            <person name="Huizar L."/>
            <person name="Hunter J.L."/>
            <person name="Jenkins J."/>
            <person name="Johnson-Hopson C."/>
            <person name="Khan S."/>
            <person name="Khaykin E."/>
            <person name="Kim C.J."/>
            <person name="Koo H.L."/>
            <person name="Kremenetskaia I."/>
            <person name="Kurtz D.B."/>
            <person name="Kwan A."/>
            <person name="Lam B."/>
            <person name="Langin-Hooper S."/>
            <person name="Lee A."/>
            <person name="Lee J.M."/>
            <person name="Lenz C.A."/>
            <person name="Li J.H."/>
            <person name="Li Y.-P."/>
            <person name="Lin X."/>
            <person name="Liu S.X."/>
            <person name="Liu Z.A."/>
            <person name="Luros J.S."/>
            <person name="Maiti R."/>
            <person name="Marziali A."/>
            <person name="Militscher J."/>
            <person name="Miranda M."/>
            <person name="Nguyen M."/>
            <person name="Nierman W.C."/>
            <person name="Osborne B.I."/>
            <person name="Pai G."/>
            <person name="Peterson J."/>
            <person name="Pham P.K."/>
            <person name="Rizzo M."/>
            <person name="Rooney T."/>
            <person name="Rowley D."/>
            <person name="Sakano H."/>
            <person name="Salzberg S.L."/>
            <person name="Schwartz J.R."/>
            <person name="Shinn P."/>
            <person name="Southwick A.M."/>
            <person name="Sun H."/>
            <person name="Tallon L.J."/>
            <person name="Tambunga G."/>
            <person name="Toriumi M.J."/>
            <person name="Town C.D."/>
            <person name="Utterback T."/>
            <person name="Van Aken S."/>
            <person name="Vaysberg M."/>
            <person name="Vysotskaia V.S."/>
            <person name="Walker M."/>
            <person name="Wu D."/>
            <person name="Yu G."/>
            <person name="Fraser C.M."/>
            <person name="Venter J.C."/>
            <person name="Davis R.W."/>
        </authorList>
    </citation>
    <scope>NUCLEOTIDE SEQUENCE [LARGE SCALE GENOMIC DNA]</scope>
    <source>
        <strain>cv. Columbia</strain>
    </source>
</reference>
<reference key="2">
    <citation type="journal article" date="2017" name="Plant J.">
        <title>Araport11: a complete reannotation of the Arabidopsis thaliana reference genome.</title>
        <authorList>
            <person name="Cheng C.Y."/>
            <person name="Krishnakumar V."/>
            <person name="Chan A.P."/>
            <person name="Thibaud-Nissen F."/>
            <person name="Schobel S."/>
            <person name="Town C.D."/>
        </authorList>
    </citation>
    <scope>GENOME REANNOTATION</scope>
    <source>
        <strain>cv. Columbia</strain>
    </source>
</reference>
<reference key="3">
    <citation type="journal article" date="2003" name="Science">
        <title>Empirical analysis of transcriptional activity in the Arabidopsis genome.</title>
        <authorList>
            <person name="Yamada K."/>
            <person name="Lim J."/>
            <person name="Dale J.M."/>
            <person name="Chen H."/>
            <person name="Shinn P."/>
            <person name="Palm C.J."/>
            <person name="Southwick A.M."/>
            <person name="Wu H.C."/>
            <person name="Kim C.J."/>
            <person name="Nguyen M."/>
            <person name="Pham P.K."/>
            <person name="Cheuk R.F."/>
            <person name="Karlin-Newmann G."/>
            <person name="Liu S.X."/>
            <person name="Lam B."/>
            <person name="Sakano H."/>
            <person name="Wu T."/>
            <person name="Yu G."/>
            <person name="Miranda M."/>
            <person name="Quach H.L."/>
            <person name="Tripp M."/>
            <person name="Chang C.H."/>
            <person name="Lee J.M."/>
            <person name="Toriumi M.J."/>
            <person name="Chan M.M."/>
            <person name="Tang C.C."/>
            <person name="Onodera C.S."/>
            <person name="Deng J.M."/>
            <person name="Akiyama K."/>
            <person name="Ansari Y."/>
            <person name="Arakawa T."/>
            <person name="Banh J."/>
            <person name="Banno F."/>
            <person name="Bowser L."/>
            <person name="Brooks S.Y."/>
            <person name="Carninci P."/>
            <person name="Chao Q."/>
            <person name="Choy N."/>
            <person name="Enju A."/>
            <person name="Goldsmith A.D."/>
            <person name="Gurjal M."/>
            <person name="Hansen N.F."/>
            <person name="Hayashizaki Y."/>
            <person name="Johnson-Hopson C."/>
            <person name="Hsuan V.W."/>
            <person name="Iida K."/>
            <person name="Karnes M."/>
            <person name="Khan S."/>
            <person name="Koesema E."/>
            <person name="Ishida J."/>
            <person name="Jiang P.X."/>
            <person name="Jones T."/>
            <person name="Kawai J."/>
            <person name="Kamiya A."/>
            <person name="Meyers C."/>
            <person name="Nakajima M."/>
            <person name="Narusaka M."/>
            <person name="Seki M."/>
            <person name="Sakurai T."/>
            <person name="Satou M."/>
            <person name="Tamse R."/>
            <person name="Vaysberg M."/>
            <person name="Wallender E.K."/>
            <person name="Wong C."/>
            <person name="Yamamura Y."/>
            <person name="Yuan S."/>
            <person name="Shinozaki K."/>
            <person name="Davis R.W."/>
            <person name="Theologis A."/>
            <person name="Ecker J.R."/>
        </authorList>
    </citation>
    <scope>NUCLEOTIDE SEQUENCE [LARGE SCALE MRNA]</scope>
    <source>
        <strain>cv. Columbia</strain>
    </source>
</reference>
<reference key="4">
    <citation type="journal article" date="2000" name="Plant Mol. Biol.">
        <title>Organization and structural evolution of four multigene families in Arabidopsis thaliana: AtLCAD, AtLGT, AtMYST and AtHD-GL2.</title>
        <authorList>
            <person name="Tavares R."/>
            <person name="Aubourg S."/>
            <person name="Lecharny A."/>
            <person name="Kreis M."/>
        </authorList>
    </citation>
    <scope>GENE FAMILY</scope>
</reference>
<reference key="5">
    <citation type="journal article" date="2006" name="Plant Physiol.">
        <title>Characterization of the class IV homeodomain-leucine zipper gene family in Arabidopsis.</title>
        <authorList>
            <person name="Nakamura M."/>
            <person name="Katsumata H."/>
            <person name="Abe M."/>
            <person name="Yabe N."/>
            <person name="Komeda Y."/>
            <person name="Yamamoto K.T."/>
            <person name="Takahashi T."/>
        </authorList>
    </citation>
    <scope>FUNCTION</scope>
    <scope>TISSUE SPECIFICITY</scope>
    <scope>GENE FAMILY</scope>
    <scope>NOMENCLATURE</scope>
    <scope>DISRUPTION PHENOTYPE</scope>
</reference>
<reference key="6">
    <citation type="journal article" date="2013" name="Plant J.">
        <title>Mutations in epidermis-specific HD-ZIP IV genes affect floral organ identity in Arabidopsis thaliana.</title>
        <authorList>
            <person name="Kamata N."/>
            <person name="Okada H."/>
            <person name="Komeda Y."/>
            <person name="Takahashi T."/>
        </authorList>
    </citation>
    <scope>FUNCTION</scope>
    <scope>DISRUPTION PHENOTYPE</scope>
    <source>
        <strain>cv. Columbia</strain>
    </source>
</reference>
<reference key="7">
    <citation type="journal article" date="2014" name="Mol. Syst. Biol.">
        <title>An organ boundary-enriched gene regulatory network uncovers regulatory hierarchies underlying axillary meristem initiation.</title>
        <authorList>
            <person name="Tian C."/>
            <person name="Zhang X."/>
            <person name="He J."/>
            <person name="Yu H."/>
            <person name="Wang Y."/>
            <person name="Shi B."/>
            <person name="Han Y."/>
            <person name="Wang G."/>
            <person name="Feng X."/>
            <person name="Zhang C."/>
            <person name="Wang J."/>
            <person name="Qi J."/>
            <person name="Yu R."/>
            <person name="Jiao Y."/>
        </authorList>
    </citation>
    <scope>FUNCTION</scope>
</reference>
<reference key="8">
    <citation type="journal article" date="2015" name="Development">
        <title>AIL and HDG proteins act antagonistically to control cell proliferation.</title>
        <authorList>
            <person name="Horstman A."/>
            <person name="Fukuoka H."/>
            <person name="Muino J.M."/>
            <person name="Nitsch L."/>
            <person name="Guo C."/>
            <person name="Passarinho P."/>
            <person name="Sanchez-Perez G."/>
            <person name="Immink R."/>
            <person name="Angenent G."/>
            <person name="Boutilier K."/>
        </authorList>
    </citation>
    <scope>FUNCTION</scope>
    <scope>DISRUPTION PHENOTYPE</scope>
    <scope>DEVELOPMENTAL STAGE</scope>
    <scope>INTERACTION WITH BBM</scope>
    <source>
        <strain>cv. Columbia</strain>
    </source>
</reference>
<dbReference type="EMBL" id="AC034106">
    <property type="protein sequence ID" value="AAF97271.1"/>
    <property type="molecule type" value="Genomic_DNA"/>
</dbReference>
<dbReference type="EMBL" id="CP002684">
    <property type="protein sequence ID" value="AEE29652.1"/>
    <property type="molecule type" value="Genomic_DNA"/>
</dbReference>
<dbReference type="EMBL" id="CP002684">
    <property type="protein sequence ID" value="ANM61017.1"/>
    <property type="molecule type" value="Genomic_DNA"/>
</dbReference>
<dbReference type="EMBL" id="AF424554">
    <property type="protein sequence ID" value="AAL11548.1"/>
    <property type="status" value="ALT_SEQ"/>
    <property type="molecule type" value="mRNA"/>
</dbReference>
<dbReference type="EMBL" id="BT001050">
    <property type="protein sequence ID" value="AAN46804.1"/>
    <property type="status" value="ALT_SEQ"/>
    <property type="molecule type" value="mRNA"/>
</dbReference>
<dbReference type="PIR" id="D86314">
    <property type="entry name" value="D86314"/>
</dbReference>
<dbReference type="RefSeq" id="NP_001323262.1">
    <property type="nucleotide sequence ID" value="NM_001332324.1"/>
</dbReference>
<dbReference type="RefSeq" id="NP_564041.2">
    <property type="nucleotide sequence ID" value="NM_101655.3"/>
</dbReference>
<dbReference type="FunCoup" id="Q9LMT8">
    <property type="interactions" value="432"/>
</dbReference>
<dbReference type="STRING" id="3702.Q9LMT8"/>
<dbReference type="iPTMnet" id="Q9LMT8"/>
<dbReference type="PaxDb" id="3702-AT1G17920.1"/>
<dbReference type="ProteomicsDB" id="230312"/>
<dbReference type="EnsemblPlants" id="AT1G17920.1">
    <property type="protein sequence ID" value="AT1G17920.1"/>
    <property type="gene ID" value="AT1G17920"/>
</dbReference>
<dbReference type="EnsemblPlants" id="AT1G17920.2">
    <property type="protein sequence ID" value="AT1G17920.2"/>
    <property type="gene ID" value="AT1G17920"/>
</dbReference>
<dbReference type="GeneID" id="838371"/>
<dbReference type="Gramene" id="AT1G17920.1">
    <property type="protein sequence ID" value="AT1G17920.1"/>
    <property type="gene ID" value="AT1G17920"/>
</dbReference>
<dbReference type="Gramene" id="AT1G17920.2">
    <property type="protein sequence ID" value="AT1G17920.2"/>
    <property type="gene ID" value="AT1G17920"/>
</dbReference>
<dbReference type="KEGG" id="ath:AT1G17920"/>
<dbReference type="Araport" id="AT1G17920"/>
<dbReference type="TAIR" id="AT1G17920">
    <property type="gene designation" value="HDG12"/>
</dbReference>
<dbReference type="eggNOG" id="ENOG502QQXM">
    <property type="taxonomic scope" value="Eukaryota"/>
</dbReference>
<dbReference type="HOGENOM" id="CLU_015002_2_1_1"/>
<dbReference type="InParanoid" id="Q9LMT8"/>
<dbReference type="OMA" id="PSSCKVH"/>
<dbReference type="PhylomeDB" id="Q9LMT8"/>
<dbReference type="PRO" id="PR:Q9LMT8"/>
<dbReference type="Proteomes" id="UP000006548">
    <property type="component" value="Chromosome 1"/>
</dbReference>
<dbReference type="ExpressionAtlas" id="Q9LMT8">
    <property type="expression patterns" value="baseline and differential"/>
</dbReference>
<dbReference type="GO" id="GO:0005634">
    <property type="term" value="C:nucleus"/>
    <property type="evidence" value="ECO:0007669"/>
    <property type="project" value="UniProtKB-SubCell"/>
</dbReference>
<dbReference type="GO" id="GO:0003677">
    <property type="term" value="F:DNA binding"/>
    <property type="evidence" value="ECO:0007669"/>
    <property type="project" value="UniProtKB-KW"/>
</dbReference>
<dbReference type="GO" id="GO:0003700">
    <property type="term" value="F:DNA-binding transcription factor activity"/>
    <property type="evidence" value="ECO:0000250"/>
    <property type="project" value="TAIR"/>
</dbReference>
<dbReference type="GO" id="GO:0000981">
    <property type="term" value="F:DNA-binding transcription factor activity, RNA polymerase II-specific"/>
    <property type="evidence" value="ECO:0007669"/>
    <property type="project" value="InterPro"/>
</dbReference>
<dbReference type="GO" id="GO:0008289">
    <property type="term" value="F:lipid binding"/>
    <property type="evidence" value="ECO:0007669"/>
    <property type="project" value="InterPro"/>
</dbReference>
<dbReference type="GO" id="GO:0030154">
    <property type="term" value="P:cell differentiation"/>
    <property type="evidence" value="ECO:0000315"/>
    <property type="project" value="UniProtKB"/>
</dbReference>
<dbReference type="GO" id="GO:0048497">
    <property type="term" value="P:maintenance of floral organ identity"/>
    <property type="evidence" value="ECO:0000315"/>
    <property type="project" value="UniProtKB"/>
</dbReference>
<dbReference type="GO" id="GO:0010091">
    <property type="term" value="P:trichome branching"/>
    <property type="evidence" value="ECO:0000316"/>
    <property type="project" value="TAIR"/>
</dbReference>
<dbReference type="CDD" id="cd00086">
    <property type="entry name" value="homeodomain"/>
    <property type="match status" value="1"/>
</dbReference>
<dbReference type="CDD" id="cd08875">
    <property type="entry name" value="START_ArGLABRA2_like"/>
    <property type="match status" value="1"/>
</dbReference>
<dbReference type="FunFam" id="3.30.530.20:FF:000026">
    <property type="entry name" value="Homeobox-leucine zipper protein GLABRA 2"/>
    <property type="match status" value="1"/>
</dbReference>
<dbReference type="FunFam" id="1.10.10.60:FF:000229">
    <property type="entry name" value="Homeobox-leucine zipper protein HDG1"/>
    <property type="match status" value="1"/>
</dbReference>
<dbReference type="Gene3D" id="3.30.530.20">
    <property type="match status" value="1"/>
</dbReference>
<dbReference type="Gene3D" id="1.10.10.60">
    <property type="entry name" value="Homeodomain-like"/>
    <property type="match status" value="1"/>
</dbReference>
<dbReference type="InterPro" id="IPR042160">
    <property type="entry name" value="GLABRA2/ANL2/PDF2/ATML1-like"/>
</dbReference>
<dbReference type="InterPro" id="IPR001356">
    <property type="entry name" value="HD"/>
</dbReference>
<dbReference type="InterPro" id="IPR017970">
    <property type="entry name" value="Homeobox_CS"/>
</dbReference>
<dbReference type="InterPro" id="IPR009057">
    <property type="entry name" value="Homeodomain-like_sf"/>
</dbReference>
<dbReference type="InterPro" id="IPR023393">
    <property type="entry name" value="START-like_dom_sf"/>
</dbReference>
<dbReference type="InterPro" id="IPR002913">
    <property type="entry name" value="START_lipid-bd_dom"/>
</dbReference>
<dbReference type="PANTHER" id="PTHR45654:SF91">
    <property type="entry name" value="HOMEOBOX-LEUCINE ZIPPER PROTEIN HDG12"/>
    <property type="match status" value="1"/>
</dbReference>
<dbReference type="PANTHER" id="PTHR45654">
    <property type="entry name" value="HOMEOBOX-LEUCINE ZIPPER PROTEIN MERISTEM L1"/>
    <property type="match status" value="1"/>
</dbReference>
<dbReference type="Pfam" id="PF00046">
    <property type="entry name" value="Homeodomain"/>
    <property type="match status" value="1"/>
</dbReference>
<dbReference type="Pfam" id="PF01852">
    <property type="entry name" value="START"/>
    <property type="match status" value="1"/>
</dbReference>
<dbReference type="SMART" id="SM00389">
    <property type="entry name" value="HOX"/>
    <property type="match status" value="1"/>
</dbReference>
<dbReference type="SMART" id="SM00234">
    <property type="entry name" value="START"/>
    <property type="match status" value="1"/>
</dbReference>
<dbReference type="SUPFAM" id="SSF55961">
    <property type="entry name" value="Bet v1-like"/>
    <property type="match status" value="2"/>
</dbReference>
<dbReference type="SUPFAM" id="SSF46689">
    <property type="entry name" value="Homeodomain-like"/>
    <property type="match status" value="1"/>
</dbReference>
<dbReference type="PROSITE" id="PS00027">
    <property type="entry name" value="HOMEOBOX_1"/>
    <property type="match status" value="1"/>
</dbReference>
<dbReference type="PROSITE" id="PS50071">
    <property type="entry name" value="HOMEOBOX_2"/>
    <property type="match status" value="1"/>
</dbReference>
<dbReference type="PROSITE" id="PS50848">
    <property type="entry name" value="START"/>
    <property type="match status" value="1"/>
</dbReference>
<name>HDG12_ARATH</name>
<gene>
    <name evidence="10" type="primary">HDG12</name>
    <name evidence="9" type="synonym">HDGL2-12</name>
    <name evidence="12" type="ordered locus">At1g17920</name>
    <name evidence="13" type="ORF">F2H15.14</name>
</gene>
<comment type="function">
    <text evidence="5 6 7 8">Probable transcription factor that acts as a negative regulator of trichome branching in association with HDG11 (PubMed:16778018). Seems to promote cell differentiation (PubMed:25564655). May regulate cell differentiation and proliferation during root and shoot meristem development (PubMed:25564655). Acts as a positive regulator of SCL18/LAS expression (PubMed:25358340). Involved, together with PDF2, in the regulation of flower organs development by promoting the expression of APETALA 3 (AP3) in the epidermis and internal cell layers of developing flowers (PubMed:23590515).</text>
</comment>
<comment type="subunit">
    <text evidence="8">Interacts with BBM.</text>
</comment>
<comment type="subcellular location">
    <subcellularLocation>
        <location evidence="2">Nucleus</location>
    </subcellularLocation>
</comment>
<comment type="tissue specificity">
    <text evidence="5">Expressed in apical meristems and young epidermal tissue including trichomes and stipules. Expressed in lateral root tips, the L1 layer of apical inflorescence meristems and early flower primordia, carpel and stamen filament epidermis, stigma papillae, ovule primordia, nucellus and embryo.</text>
</comment>
<comment type="developmental stage">
    <text evidence="8">During embryo development, expressed in all cells at the 4- and 16-cell embryo stages (PubMed:25564655). Expression is restricted to the protoderm from the globular stage onward (PubMed:25564655). In primary and lateral roots, observed in the epidermis, the outer layer of columella cells and lateral root cap (PubMed:25564655).</text>
</comment>
<comment type="disruption phenotype">
    <text evidence="5 6">No visible phenotype under normal growth conditions, but the double mutants hdg11 and hdg12 exhibit excess branching of trichomes (PubMed:16778018). The double mutant pdf2-1 hdg12-2 exhibits abnormal flowers with sepaloid petals and carpelloid stamens in association with a reduced expression of APETALA 3 (AP3) in the epidermis and internal cell layers of developing flowers (PubMed:23590515).</text>
</comment>
<comment type="similarity">
    <text evidence="11">Belongs to the HD-ZIP homeobox family. Class IV subfamily.</text>
</comment>
<comment type="sequence caution" evidence="11">
    <conflict type="miscellaneous discrepancy">
        <sequence resource="EMBL-CDS" id="AAL11548"/>
    </conflict>
    <text>Intron retention.</text>
</comment>
<comment type="sequence caution" evidence="11">
    <conflict type="miscellaneous discrepancy">
        <sequence resource="EMBL-CDS" id="AAN46804"/>
    </conflict>
    <text>Intron retention.</text>
</comment>